<comment type="function">
    <text evidence="1">Is required not only for elongation of protein synthesis but also for the initiation of all mRNA translation through initiator tRNA(fMet) aminoacylation.</text>
</comment>
<comment type="catalytic activity">
    <reaction evidence="1">
        <text>tRNA(Met) + L-methionine + ATP = L-methionyl-tRNA(Met) + AMP + diphosphate</text>
        <dbReference type="Rhea" id="RHEA:13481"/>
        <dbReference type="Rhea" id="RHEA-COMP:9667"/>
        <dbReference type="Rhea" id="RHEA-COMP:9698"/>
        <dbReference type="ChEBI" id="CHEBI:30616"/>
        <dbReference type="ChEBI" id="CHEBI:33019"/>
        <dbReference type="ChEBI" id="CHEBI:57844"/>
        <dbReference type="ChEBI" id="CHEBI:78442"/>
        <dbReference type="ChEBI" id="CHEBI:78530"/>
        <dbReference type="ChEBI" id="CHEBI:456215"/>
        <dbReference type="EC" id="6.1.1.10"/>
    </reaction>
</comment>
<comment type="subunit">
    <text evidence="1">Monomer.</text>
</comment>
<comment type="subcellular location">
    <subcellularLocation>
        <location evidence="1">Cytoplasm</location>
    </subcellularLocation>
</comment>
<comment type="similarity">
    <text evidence="1">Belongs to the class-I aminoacyl-tRNA synthetase family. MetG type 2B subfamily.</text>
</comment>
<accession>Q4UMX2</accession>
<proteinExistence type="inferred from homology"/>
<sequence length="512" mass="58800">MKNTYYITTPIYYVNDVPHIGHAYTSVASDVIARFIRLCGFDVMFLTGTDEHGQKVEKAAINKNIDPQKFTDHTSESFRHLMNVMNISNDDFIRTTESRHKEAVAIFWQKLLDNGTIYEGFYEGWYAVRDEAFFDESELTSDGLAPTGAPVEWVKEPSYFFNLSKWQDKLLEFYEANPDFIRPISRRNEVISFVKSGLKDLSVSRTTFNWGIKVPNNEKHVIYVWLDALASYISALGYPDKQSNYGKFWPADLHVVGKDILRFHAVYWPAFLMAAEIPLPKTIMAHGWWTNEGQKISKSLGNTIDPIKLIDEFGVDQVRYFLMREVTFGADGNFARSNLVTRINSELSNKIGNLLQRTTAFVYKNNDGKVPLLMQGIIDKIYELPILKTASKFAEQNILLMEKTEINKVLENIINLSEEANIYIDSEAPWNLKKTDPEKMSEVLYTLLEVLRYIAIMLQPFIPSSANKMLDQLGVNKEERLFKHLIRDYALRAGSSILEPAIIFPRFEGDVV</sequence>
<evidence type="ECO:0000255" key="1">
    <source>
        <dbReference type="HAMAP-Rule" id="MF_01228"/>
    </source>
</evidence>
<gene>
    <name evidence="1" type="primary">metG</name>
    <name type="ordered locus">RF_0235</name>
</gene>
<keyword id="KW-0030">Aminoacyl-tRNA synthetase</keyword>
<keyword id="KW-0067">ATP-binding</keyword>
<keyword id="KW-0963">Cytoplasm</keyword>
<keyword id="KW-0436">Ligase</keyword>
<keyword id="KW-0547">Nucleotide-binding</keyword>
<keyword id="KW-0648">Protein biosynthesis</keyword>
<protein>
    <recommendedName>
        <fullName evidence="1">Methionine--tRNA ligase</fullName>
        <ecNumber evidence="1">6.1.1.10</ecNumber>
    </recommendedName>
    <alternativeName>
        <fullName evidence="1">Methionyl-tRNA synthetase</fullName>
        <shortName evidence="1">MetRS</shortName>
    </alternativeName>
</protein>
<organism>
    <name type="scientific">Rickettsia felis (strain ATCC VR-1525 / URRWXCal2)</name>
    <name type="common">Rickettsia azadi</name>
    <dbReference type="NCBI Taxonomy" id="315456"/>
    <lineage>
        <taxon>Bacteria</taxon>
        <taxon>Pseudomonadati</taxon>
        <taxon>Pseudomonadota</taxon>
        <taxon>Alphaproteobacteria</taxon>
        <taxon>Rickettsiales</taxon>
        <taxon>Rickettsiaceae</taxon>
        <taxon>Rickettsieae</taxon>
        <taxon>Rickettsia</taxon>
        <taxon>spotted fever group</taxon>
    </lineage>
</organism>
<name>SYM_RICFE</name>
<feature type="chain" id="PRO_0000272402" description="Methionine--tRNA ligase">
    <location>
        <begin position="1"/>
        <end position="512"/>
    </location>
</feature>
<feature type="short sequence motif" description="'HIGH' region">
    <location>
        <begin position="12"/>
        <end position="22"/>
    </location>
</feature>
<feature type="short sequence motif" description="'KMSKS' region">
    <location>
        <begin position="295"/>
        <end position="299"/>
    </location>
</feature>
<feature type="binding site" evidence="1">
    <location>
        <position position="298"/>
    </location>
    <ligand>
        <name>ATP</name>
        <dbReference type="ChEBI" id="CHEBI:30616"/>
    </ligand>
</feature>
<reference key="1">
    <citation type="journal article" date="2005" name="PLoS Biol.">
        <title>The genome sequence of Rickettsia felis identifies the first putative conjugative plasmid in an obligate intracellular parasite.</title>
        <authorList>
            <person name="Ogata H."/>
            <person name="Renesto P."/>
            <person name="Audic S."/>
            <person name="Robert C."/>
            <person name="Blanc G."/>
            <person name="Fournier P.-E."/>
            <person name="Parinello H."/>
            <person name="Claverie J.-M."/>
            <person name="Raoult D."/>
        </authorList>
    </citation>
    <scope>NUCLEOTIDE SEQUENCE [LARGE SCALE GENOMIC DNA]</scope>
    <source>
        <strain>ATCC VR-1525 / URRWXCal2</strain>
    </source>
</reference>
<dbReference type="EC" id="6.1.1.10" evidence="1"/>
<dbReference type="EMBL" id="CP000053">
    <property type="protein sequence ID" value="AAY61086.1"/>
    <property type="molecule type" value="Genomic_DNA"/>
</dbReference>
<dbReference type="SMR" id="Q4UMX2"/>
<dbReference type="STRING" id="315456.RF_0235"/>
<dbReference type="KEGG" id="rfe:RF_0235"/>
<dbReference type="eggNOG" id="COG0143">
    <property type="taxonomic scope" value="Bacteria"/>
</dbReference>
<dbReference type="HOGENOM" id="CLU_009710_9_2_5"/>
<dbReference type="OrthoDB" id="9810191at2"/>
<dbReference type="Proteomes" id="UP000008548">
    <property type="component" value="Chromosome"/>
</dbReference>
<dbReference type="GO" id="GO:0005737">
    <property type="term" value="C:cytoplasm"/>
    <property type="evidence" value="ECO:0007669"/>
    <property type="project" value="UniProtKB-SubCell"/>
</dbReference>
<dbReference type="GO" id="GO:0005524">
    <property type="term" value="F:ATP binding"/>
    <property type="evidence" value="ECO:0007669"/>
    <property type="project" value="UniProtKB-UniRule"/>
</dbReference>
<dbReference type="GO" id="GO:0004825">
    <property type="term" value="F:methionine-tRNA ligase activity"/>
    <property type="evidence" value="ECO:0007669"/>
    <property type="project" value="UniProtKB-UniRule"/>
</dbReference>
<dbReference type="GO" id="GO:0006431">
    <property type="term" value="P:methionyl-tRNA aminoacylation"/>
    <property type="evidence" value="ECO:0007669"/>
    <property type="project" value="UniProtKB-UniRule"/>
</dbReference>
<dbReference type="CDD" id="cd07957">
    <property type="entry name" value="Anticodon_Ia_Met"/>
    <property type="match status" value="1"/>
</dbReference>
<dbReference type="CDD" id="cd00814">
    <property type="entry name" value="MetRS_core"/>
    <property type="match status" value="1"/>
</dbReference>
<dbReference type="FunFam" id="2.170.220.10:FF:000001">
    <property type="entry name" value="methionine--tRNA ligase, mitochondrial"/>
    <property type="match status" value="1"/>
</dbReference>
<dbReference type="Gene3D" id="2.170.220.10">
    <property type="match status" value="1"/>
</dbReference>
<dbReference type="Gene3D" id="3.40.50.620">
    <property type="entry name" value="HUPs"/>
    <property type="match status" value="1"/>
</dbReference>
<dbReference type="Gene3D" id="1.10.730.10">
    <property type="entry name" value="Isoleucyl-tRNA Synthetase, Domain 1"/>
    <property type="match status" value="1"/>
</dbReference>
<dbReference type="HAMAP" id="MF_01228">
    <property type="entry name" value="Met_tRNA_synth_type2"/>
    <property type="match status" value="1"/>
</dbReference>
<dbReference type="InterPro" id="IPR041872">
    <property type="entry name" value="Anticodon_Met"/>
</dbReference>
<dbReference type="InterPro" id="IPR014758">
    <property type="entry name" value="Met-tRNA_synth"/>
</dbReference>
<dbReference type="InterPro" id="IPR023457">
    <property type="entry name" value="Met-tRNA_synth_2"/>
</dbReference>
<dbReference type="InterPro" id="IPR015413">
    <property type="entry name" value="Methionyl/Leucyl_tRNA_Synth"/>
</dbReference>
<dbReference type="InterPro" id="IPR033911">
    <property type="entry name" value="MetRS_core"/>
</dbReference>
<dbReference type="InterPro" id="IPR014729">
    <property type="entry name" value="Rossmann-like_a/b/a_fold"/>
</dbReference>
<dbReference type="InterPro" id="IPR009080">
    <property type="entry name" value="tRNAsynth_Ia_anticodon-bd"/>
</dbReference>
<dbReference type="NCBIfam" id="TIGR00398">
    <property type="entry name" value="metG"/>
    <property type="match status" value="1"/>
</dbReference>
<dbReference type="NCBIfam" id="NF008900">
    <property type="entry name" value="PRK12267.1"/>
    <property type="match status" value="1"/>
</dbReference>
<dbReference type="PANTHER" id="PTHR43326:SF1">
    <property type="entry name" value="METHIONINE--TRNA LIGASE, MITOCHONDRIAL"/>
    <property type="match status" value="1"/>
</dbReference>
<dbReference type="PANTHER" id="PTHR43326">
    <property type="entry name" value="METHIONYL-TRNA SYNTHETASE"/>
    <property type="match status" value="1"/>
</dbReference>
<dbReference type="Pfam" id="PF19303">
    <property type="entry name" value="Anticodon_3"/>
    <property type="match status" value="1"/>
</dbReference>
<dbReference type="Pfam" id="PF09334">
    <property type="entry name" value="tRNA-synt_1g"/>
    <property type="match status" value="2"/>
</dbReference>
<dbReference type="PRINTS" id="PR01041">
    <property type="entry name" value="TRNASYNTHMET"/>
</dbReference>
<dbReference type="SUPFAM" id="SSF47323">
    <property type="entry name" value="Anticodon-binding domain of a subclass of class I aminoacyl-tRNA synthetases"/>
    <property type="match status" value="1"/>
</dbReference>
<dbReference type="SUPFAM" id="SSF52374">
    <property type="entry name" value="Nucleotidylyl transferase"/>
    <property type="match status" value="1"/>
</dbReference>